<dbReference type="EMBL" id="AM889285">
    <property type="protein sequence ID" value="CAP54527.1"/>
    <property type="molecule type" value="Genomic_DNA"/>
</dbReference>
<dbReference type="EMBL" id="CP001189">
    <property type="protein sequence ID" value="ACI51196.1"/>
    <property type="molecule type" value="Genomic_DNA"/>
</dbReference>
<dbReference type="RefSeq" id="WP_012223106.1">
    <property type="nucleotide sequence ID" value="NC_010125.1"/>
</dbReference>
<dbReference type="RefSeq" id="WP_012553768.1">
    <property type="nucleotide sequence ID" value="NC_011365.1"/>
</dbReference>
<dbReference type="SMR" id="A9H8F8"/>
<dbReference type="STRING" id="272568.GDI0584"/>
<dbReference type="KEGG" id="gdi:GDI0584"/>
<dbReference type="KEGG" id="gdj:Gdia_1416"/>
<dbReference type="eggNOG" id="COG1826">
    <property type="taxonomic scope" value="Bacteria"/>
</dbReference>
<dbReference type="HOGENOM" id="CLU_086034_5_0_5"/>
<dbReference type="OrthoDB" id="7161179at2"/>
<dbReference type="Proteomes" id="UP000001176">
    <property type="component" value="Chromosome"/>
</dbReference>
<dbReference type="GO" id="GO:0033281">
    <property type="term" value="C:TAT protein transport complex"/>
    <property type="evidence" value="ECO:0007669"/>
    <property type="project" value="UniProtKB-UniRule"/>
</dbReference>
<dbReference type="GO" id="GO:0008320">
    <property type="term" value="F:protein transmembrane transporter activity"/>
    <property type="evidence" value="ECO:0007669"/>
    <property type="project" value="UniProtKB-UniRule"/>
</dbReference>
<dbReference type="GO" id="GO:0043953">
    <property type="term" value="P:protein transport by the Tat complex"/>
    <property type="evidence" value="ECO:0007669"/>
    <property type="project" value="UniProtKB-UniRule"/>
</dbReference>
<dbReference type="Gene3D" id="1.20.5.3310">
    <property type="match status" value="1"/>
</dbReference>
<dbReference type="HAMAP" id="MF_00236">
    <property type="entry name" value="TatA_E"/>
    <property type="match status" value="1"/>
</dbReference>
<dbReference type="InterPro" id="IPR003369">
    <property type="entry name" value="TatA/B/E"/>
</dbReference>
<dbReference type="InterPro" id="IPR006312">
    <property type="entry name" value="TatA/E"/>
</dbReference>
<dbReference type="NCBIfam" id="NF001940">
    <property type="entry name" value="PRK00720.1"/>
    <property type="match status" value="1"/>
</dbReference>
<dbReference type="NCBIfam" id="TIGR01411">
    <property type="entry name" value="tatAE"/>
    <property type="match status" value="1"/>
</dbReference>
<dbReference type="PANTHER" id="PTHR42982">
    <property type="entry name" value="SEC-INDEPENDENT PROTEIN TRANSLOCASE PROTEIN TATA"/>
    <property type="match status" value="1"/>
</dbReference>
<dbReference type="PANTHER" id="PTHR42982:SF1">
    <property type="entry name" value="SEC-INDEPENDENT PROTEIN TRANSLOCASE PROTEIN TATA"/>
    <property type="match status" value="1"/>
</dbReference>
<dbReference type="Pfam" id="PF02416">
    <property type="entry name" value="TatA_B_E"/>
    <property type="match status" value="1"/>
</dbReference>
<gene>
    <name evidence="1" type="primary">tatA</name>
    <name type="ordered locus">GDI0584</name>
    <name type="ordered locus">Gdia_1416</name>
</gene>
<keyword id="KW-0997">Cell inner membrane</keyword>
<keyword id="KW-1003">Cell membrane</keyword>
<keyword id="KW-0472">Membrane</keyword>
<keyword id="KW-0653">Protein transport</keyword>
<keyword id="KW-1185">Reference proteome</keyword>
<keyword id="KW-0811">Translocation</keyword>
<keyword id="KW-0812">Transmembrane</keyword>
<keyword id="KW-1133">Transmembrane helix</keyword>
<keyword id="KW-0813">Transport</keyword>
<comment type="function">
    <text evidence="1">Part of the twin-arginine translocation (Tat) system that transports large folded proteins containing a characteristic twin-arginine motif in their signal peptide across membranes. TatA could form the protein-conducting channel of the Tat system.</text>
</comment>
<comment type="subunit">
    <text evidence="1">The Tat system comprises two distinct complexes: a TatABC complex, containing multiple copies of TatA, TatB and TatC subunits, and a separate TatA complex, containing only TatA subunits. Substrates initially bind to the TatABC complex, which probably triggers association of the separate TatA complex to form the active translocon.</text>
</comment>
<comment type="subcellular location">
    <subcellularLocation>
        <location evidence="1">Cell inner membrane</location>
        <topology evidence="1">Single-pass membrane protein</topology>
    </subcellularLocation>
</comment>
<comment type="similarity">
    <text evidence="1">Belongs to the TatA/E family.</text>
</comment>
<accession>A9H8F8</accession>
<accession>B5ZI58</accession>
<evidence type="ECO:0000255" key="1">
    <source>
        <dbReference type="HAMAP-Rule" id="MF_00236"/>
    </source>
</evidence>
<evidence type="ECO:0000256" key="2">
    <source>
        <dbReference type="SAM" id="MobiDB-lite"/>
    </source>
</evidence>
<evidence type="ECO:0000305" key="3"/>
<sequence length="88" mass="8901">MGSLSIWHWLIVLAVVLVLFVGGGKISTLMGDVARGVKSFKKNMADDETMEGSTGSGGHIAPPGPAAGTVQRDASFSGTGRPSGSSTP</sequence>
<reference key="1">
    <citation type="journal article" date="2009" name="BMC Genomics">
        <title>Complete genome sequence of the sugarcane nitrogen-fixing endophyte Gluconacetobacter diazotrophicus Pal5.</title>
        <authorList>
            <person name="Bertalan M."/>
            <person name="Albano R."/>
            <person name="de Padua V."/>
            <person name="Rouws L."/>
            <person name="Rojas C."/>
            <person name="Hemerly A."/>
            <person name="Teixeira K."/>
            <person name="Schwab S."/>
            <person name="Araujo J."/>
            <person name="Oliveira A."/>
            <person name="Franca L."/>
            <person name="Magalhaes V."/>
            <person name="Alqueres S."/>
            <person name="Cardoso A."/>
            <person name="Almeida W."/>
            <person name="Loureiro M.M."/>
            <person name="Nogueira E."/>
            <person name="Cidade D."/>
            <person name="Oliveira D."/>
            <person name="Simao T."/>
            <person name="Macedo J."/>
            <person name="Valadao A."/>
            <person name="Dreschsel M."/>
            <person name="Freitas F."/>
            <person name="Vidal M."/>
            <person name="Guedes H."/>
            <person name="Rodrigues E."/>
            <person name="Meneses C."/>
            <person name="Brioso P."/>
            <person name="Pozzer L."/>
            <person name="Figueiredo D."/>
            <person name="Montano H."/>
            <person name="Junior J."/>
            <person name="de Souza Filho G."/>
            <person name="Martin Quintana Flores V."/>
            <person name="Ferreira B."/>
            <person name="Branco A."/>
            <person name="Gonzalez P."/>
            <person name="Guillobel H."/>
            <person name="Lemos M."/>
            <person name="Seibel L."/>
            <person name="Macedo J."/>
            <person name="Alves-Ferreira M."/>
            <person name="Sachetto-Martins G."/>
            <person name="Coelho A."/>
            <person name="Santos E."/>
            <person name="Amaral G."/>
            <person name="Neves A."/>
            <person name="Pacheco A.B."/>
            <person name="Carvalho D."/>
            <person name="Lery L."/>
            <person name="Bisch P."/>
            <person name="Rossle S.C."/>
            <person name="Urmenyi T."/>
            <person name="Rael Pereira A."/>
            <person name="Silva R."/>
            <person name="Rondinelli E."/>
            <person name="von Kruger W."/>
            <person name="Martins O."/>
            <person name="Baldani J.I."/>
            <person name="Ferreira P.C."/>
        </authorList>
    </citation>
    <scope>NUCLEOTIDE SEQUENCE [LARGE SCALE GENOMIC DNA]</scope>
    <source>
        <strain>ATCC 49037 / DSM 5601 / CCUG 37298 / CIP 103539 / LMG 7603 / PAl5</strain>
    </source>
</reference>
<reference key="2">
    <citation type="journal article" date="2010" name="Stand. Genomic Sci.">
        <title>Two genome sequences of the same bacterial strain, Gluconacetobacter diazotrophicus PAl 5, suggest a new standard in genome sequence submission.</title>
        <authorList>
            <person name="Giongo A."/>
            <person name="Tyler H.L."/>
            <person name="Zipperer U.N."/>
            <person name="Triplett E.W."/>
        </authorList>
    </citation>
    <scope>NUCLEOTIDE SEQUENCE [LARGE SCALE GENOMIC DNA]</scope>
    <source>
        <strain>ATCC 49037 / DSM 5601 / CCUG 37298 / CIP 103539 / LMG 7603 / PAl5</strain>
    </source>
</reference>
<protein>
    <recommendedName>
        <fullName evidence="1">Sec-independent protein translocase protein TatA</fullName>
    </recommendedName>
</protein>
<organism>
    <name type="scientific">Gluconacetobacter diazotrophicus (strain ATCC 49037 / DSM 5601 / CCUG 37298 / CIP 103539 / LMG 7603 / PAl5)</name>
    <dbReference type="NCBI Taxonomy" id="272568"/>
    <lineage>
        <taxon>Bacteria</taxon>
        <taxon>Pseudomonadati</taxon>
        <taxon>Pseudomonadota</taxon>
        <taxon>Alphaproteobacteria</taxon>
        <taxon>Acetobacterales</taxon>
        <taxon>Acetobacteraceae</taxon>
        <taxon>Gluconacetobacter</taxon>
    </lineage>
</organism>
<name>TATA_GLUDA</name>
<feature type="chain" id="PRO_1000078307" description="Sec-independent protein translocase protein TatA">
    <location>
        <begin position="1"/>
        <end position="88"/>
    </location>
</feature>
<feature type="transmembrane region" description="Helical" evidence="1">
    <location>
        <begin position="4"/>
        <end position="24"/>
    </location>
</feature>
<feature type="region of interest" description="Disordered" evidence="2">
    <location>
        <begin position="45"/>
        <end position="88"/>
    </location>
</feature>
<feature type="compositionally biased region" description="Low complexity" evidence="2">
    <location>
        <begin position="75"/>
        <end position="88"/>
    </location>
</feature>
<feature type="sequence conflict" description="In Ref. 2; ACI51196." evidence="3" ref="2">
    <original>V</original>
    <variation>G</variation>
    <location>
        <position position="21"/>
    </location>
</feature>
<feature type="sequence conflict" description="In Ref. 2; ACI51196." evidence="3" ref="2">
    <original>TGS</original>
    <variation>AGP</variation>
    <location>
        <begin position="54"/>
        <end position="56"/>
    </location>
</feature>
<proteinExistence type="inferred from homology"/>